<feature type="chain" id="PRO_0000237045" description="Small ribosomal subunit protein uS10">
    <location>
        <begin position="1"/>
        <end position="105"/>
    </location>
</feature>
<reference key="1">
    <citation type="journal article" date="2005" name="Nat. Genet.">
        <title>The complete genome sequence of Francisella tularensis, the causative agent of tularemia.</title>
        <authorList>
            <person name="Larsson P."/>
            <person name="Oyston P.C.F."/>
            <person name="Chain P."/>
            <person name="Chu M.C."/>
            <person name="Duffield M."/>
            <person name="Fuxelius H.-H."/>
            <person name="Garcia E."/>
            <person name="Haelltorp G."/>
            <person name="Johansson D."/>
            <person name="Isherwood K.E."/>
            <person name="Karp P.D."/>
            <person name="Larsson E."/>
            <person name="Liu Y."/>
            <person name="Michell S."/>
            <person name="Prior J."/>
            <person name="Prior R."/>
            <person name="Malfatti S."/>
            <person name="Sjoestedt A."/>
            <person name="Svensson K."/>
            <person name="Thompson N."/>
            <person name="Vergez L."/>
            <person name="Wagg J.K."/>
            <person name="Wren B.W."/>
            <person name="Lindler L.E."/>
            <person name="Andersson S.G.E."/>
            <person name="Forsman M."/>
            <person name="Titball R.W."/>
        </authorList>
    </citation>
    <scope>NUCLEOTIDE SEQUENCE [LARGE SCALE GENOMIC DNA]</scope>
    <source>
        <strain>SCHU S4 / Schu 4</strain>
    </source>
</reference>
<organism>
    <name type="scientific">Francisella tularensis subsp. tularensis (strain SCHU S4 / Schu 4)</name>
    <dbReference type="NCBI Taxonomy" id="177416"/>
    <lineage>
        <taxon>Bacteria</taxon>
        <taxon>Pseudomonadati</taxon>
        <taxon>Pseudomonadota</taxon>
        <taxon>Gammaproteobacteria</taxon>
        <taxon>Thiotrichales</taxon>
        <taxon>Francisellaceae</taxon>
        <taxon>Francisella</taxon>
    </lineage>
</organism>
<sequence length="105" mass="11924">MAINNQRIRIRLKAFDHKLIDISTQEIVDTAKKTGAQVKGPIPLPVRKERFTILISPHVNKKARDQYEIRTHKRLIDIVEPTDKTVDALMKLDLASGVDVQISLS</sequence>
<comment type="function">
    <text evidence="1">Involved in the binding of tRNA to the ribosomes.</text>
</comment>
<comment type="subunit">
    <text evidence="1">Part of the 30S ribosomal subunit.</text>
</comment>
<comment type="similarity">
    <text evidence="1">Belongs to the universal ribosomal protein uS10 family.</text>
</comment>
<proteinExistence type="inferred from homology"/>
<evidence type="ECO:0000255" key="1">
    <source>
        <dbReference type="HAMAP-Rule" id="MF_00508"/>
    </source>
</evidence>
<evidence type="ECO:0000305" key="2"/>
<dbReference type="EMBL" id="AJ749949">
    <property type="protein sequence ID" value="CAG44957.1"/>
    <property type="molecule type" value="Genomic_DNA"/>
</dbReference>
<dbReference type="RefSeq" id="YP_169373.1">
    <property type="nucleotide sequence ID" value="NC_006570.2"/>
</dbReference>
<dbReference type="SMR" id="Q5NHW9"/>
<dbReference type="STRING" id="177416.FTT_0324"/>
<dbReference type="DNASU" id="3191189"/>
<dbReference type="EnsemblBacteria" id="CAG44957">
    <property type="protein sequence ID" value="CAG44957"/>
    <property type="gene ID" value="FTT_0324"/>
</dbReference>
<dbReference type="KEGG" id="ftu:FTT_0324"/>
<dbReference type="eggNOG" id="COG0051">
    <property type="taxonomic scope" value="Bacteria"/>
</dbReference>
<dbReference type="OrthoDB" id="9804464at2"/>
<dbReference type="Proteomes" id="UP000001174">
    <property type="component" value="Chromosome"/>
</dbReference>
<dbReference type="GO" id="GO:1990904">
    <property type="term" value="C:ribonucleoprotein complex"/>
    <property type="evidence" value="ECO:0007669"/>
    <property type="project" value="UniProtKB-KW"/>
</dbReference>
<dbReference type="GO" id="GO:0005840">
    <property type="term" value="C:ribosome"/>
    <property type="evidence" value="ECO:0007669"/>
    <property type="project" value="UniProtKB-KW"/>
</dbReference>
<dbReference type="GO" id="GO:0003735">
    <property type="term" value="F:structural constituent of ribosome"/>
    <property type="evidence" value="ECO:0007669"/>
    <property type="project" value="InterPro"/>
</dbReference>
<dbReference type="GO" id="GO:0000049">
    <property type="term" value="F:tRNA binding"/>
    <property type="evidence" value="ECO:0007669"/>
    <property type="project" value="UniProtKB-UniRule"/>
</dbReference>
<dbReference type="GO" id="GO:0006412">
    <property type="term" value="P:translation"/>
    <property type="evidence" value="ECO:0007669"/>
    <property type="project" value="UniProtKB-UniRule"/>
</dbReference>
<dbReference type="FunFam" id="3.30.70.600:FF:000001">
    <property type="entry name" value="30S ribosomal protein S10"/>
    <property type="match status" value="1"/>
</dbReference>
<dbReference type="Gene3D" id="3.30.70.600">
    <property type="entry name" value="Ribosomal protein S10 domain"/>
    <property type="match status" value="1"/>
</dbReference>
<dbReference type="HAMAP" id="MF_00508">
    <property type="entry name" value="Ribosomal_uS10"/>
    <property type="match status" value="1"/>
</dbReference>
<dbReference type="InterPro" id="IPR001848">
    <property type="entry name" value="Ribosomal_uS10"/>
</dbReference>
<dbReference type="InterPro" id="IPR027486">
    <property type="entry name" value="Ribosomal_uS10_dom"/>
</dbReference>
<dbReference type="InterPro" id="IPR036838">
    <property type="entry name" value="Ribosomal_uS10_dom_sf"/>
</dbReference>
<dbReference type="NCBIfam" id="NF001861">
    <property type="entry name" value="PRK00596.1"/>
    <property type="match status" value="1"/>
</dbReference>
<dbReference type="NCBIfam" id="TIGR01049">
    <property type="entry name" value="rpsJ_bact"/>
    <property type="match status" value="1"/>
</dbReference>
<dbReference type="PANTHER" id="PTHR11700">
    <property type="entry name" value="30S RIBOSOMAL PROTEIN S10 FAMILY MEMBER"/>
    <property type="match status" value="1"/>
</dbReference>
<dbReference type="Pfam" id="PF00338">
    <property type="entry name" value="Ribosomal_S10"/>
    <property type="match status" value="1"/>
</dbReference>
<dbReference type="PRINTS" id="PR00971">
    <property type="entry name" value="RIBOSOMALS10"/>
</dbReference>
<dbReference type="SMART" id="SM01403">
    <property type="entry name" value="Ribosomal_S10"/>
    <property type="match status" value="1"/>
</dbReference>
<dbReference type="SUPFAM" id="SSF54999">
    <property type="entry name" value="Ribosomal protein S10"/>
    <property type="match status" value="1"/>
</dbReference>
<accession>Q5NHW9</accession>
<keyword id="KW-1185">Reference proteome</keyword>
<keyword id="KW-0687">Ribonucleoprotein</keyword>
<keyword id="KW-0689">Ribosomal protein</keyword>
<protein>
    <recommendedName>
        <fullName evidence="1">Small ribosomal subunit protein uS10</fullName>
    </recommendedName>
    <alternativeName>
        <fullName evidence="2">30S ribosomal protein S10</fullName>
    </alternativeName>
</protein>
<name>RS10_FRATT</name>
<gene>
    <name evidence="1" type="primary">rpsJ</name>
    <name type="ordered locus">FTT_0324</name>
</gene>